<proteinExistence type="inferred from homology"/>
<gene>
    <name evidence="1" type="primary">murI</name>
    <name type="ordered locus">SG3285</name>
</gene>
<feature type="chain" id="PRO_1000114062" description="Glutamate racemase">
    <location>
        <begin position="1"/>
        <end position="283"/>
    </location>
</feature>
<feature type="active site" description="Proton donor/acceptor" evidence="1">
    <location>
        <position position="92"/>
    </location>
</feature>
<feature type="active site" description="Proton donor/acceptor" evidence="1">
    <location>
        <position position="204"/>
    </location>
</feature>
<feature type="binding site" evidence="1">
    <location>
        <begin position="28"/>
        <end position="29"/>
    </location>
    <ligand>
        <name>substrate</name>
    </ligand>
</feature>
<feature type="binding site" evidence="1">
    <location>
        <begin position="60"/>
        <end position="61"/>
    </location>
    <ligand>
        <name>substrate</name>
    </ligand>
</feature>
<feature type="binding site" evidence="1">
    <location>
        <begin position="93"/>
        <end position="94"/>
    </location>
    <ligand>
        <name>substrate</name>
    </ligand>
</feature>
<feature type="binding site" evidence="1">
    <location>
        <begin position="205"/>
        <end position="206"/>
    </location>
    <ligand>
        <name>substrate</name>
    </ligand>
</feature>
<evidence type="ECO:0000255" key="1">
    <source>
        <dbReference type="HAMAP-Rule" id="MF_00258"/>
    </source>
</evidence>
<dbReference type="EC" id="5.1.1.3" evidence="1"/>
<dbReference type="EMBL" id="AM933173">
    <property type="protein sequence ID" value="CAR39081.1"/>
    <property type="molecule type" value="Genomic_DNA"/>
</dbReference>
<dbReference type="RefSeq" id="WP_000201800.1">
    <property type="nucleotide sequence ID" value="NC_011274.1"/>
</dbReference>
<dbReference type="SMR" id="B5REZ1"/>
<dbReference type="KEGG" id="seg:SG3285"/>
<dbReference type="HOGENOM" id="CLU_052344_2_0_6"/>
<dbReference type="UniPathway" id="UPA00219"/>
<dbReference type="Proteomes" id="UP000008321">
    <property type="component" value="Chromosome"/>
</dbReference>
<dbReference type="GO" id="GO:0008881">
    <property type="term" value="F:glutamate racemase activity"/>
    <property type="evidence" value="ECO:0007669"/>
    <property type="project" value="UniProtKB-UniRule"/>
</dbReference>
<dbReference type="GO" id="GO:0071555">
    <property type="term" value="P:cell wall organization"/>
    <property type="evidence" value="ECO:0007669"/>
    <property type="project" value="UniProtKB-KW"/>
</dbReference>
<dbReference type="GO" id="GO:0009252">
    <property type="term" value="P:peptidoglycan biosynthetic process"/>
    <property type="evidence" value="ECO:0007669"/>
    <property type="project" value="UniProtKB-UniRule"/>
</dbReference>
<dbReference type="GO" id="GO:0008360">
    <property type="term" value="P:regulation of cell shape"/>
    <property type="evidence" value="ECO:0007669"/>
    <property type="project" value="UniProtKB-KW"/>
</dbReference>
<dbReference type="FunFam" id="3.40.50.1860:FF:000002">
    <property type="entry name" value="Glutamate racemase"/>
    <property type="match status" value="1"/>
</dbReference>
<dbReference type="Gene3D" id="3.40.50.1860">
    <property type="match status" value="2"/>
</dbReference>
<dbReference type="HAMAP" id="MF_00258">
    <property type="entry name" value="Glu_racemase"/>
    <property type="match status" value="1"/>
</dbReference>
<dbReference type="InterPro" id="IPR015942">
    <property type="entry name" value="Asp/Glu/hydantoin_racemase"/>
</dbReference>
<dbReference type="InterPro" id="IPR001920">
    <property type="entry name" value="Asp/Glu_race"/>
</dbReference>
<dbReference type="InterPro" id="IPR018187">
    <property type="entry name" value="Asp/Glu_racemase_AS_1"/>
</dbReference>
<dbReference type="InterPro" id="IPR033134">
    <property type="entry name" value="Asp/Glu_racemase_AS_2"/>
</dbReference>
<dbReference type="InterPro" id="IPR004391">
    <property type="entry name" value="Glu_race"/>
</dbReference>
<dbReference type="NCBIfam" id="TIGR00067">
    <property type="entry name" value="glut_race"/>
    <property type="match status" value="1"/>
</dbReference>
<dbReference type="NCBIfam" id="NF002034">
    <property type="entry name" value="PRK00865.1-1"/>
    <property type="match status" value="1"/>
</dbReference>
<dbReference type="PANTHER" id="PTHR21198">
    <property type="entry name" value="GLUTAMATE RACEMASE"/>
    <property type="match status" value="1"/>
</dbReference>
<dbReference type="PANTHER" id="PTHR21198:SF2">
    <property type="entry name" value="GLUTAMATE RACEMASE"/>
    <property type="match status" value="1"/>
</dbReference>
<dbReference type="Pfam" id="PF01177">
    <property type="entry name" value="Asp_Glu_race"/>
    <property type="match status" value="1"/>
</dbReference>
<dbReference type="SUPFAM" id="SSF53681">
    <property type="entry name" value="Aspartate/glutamate racemase"/>
    <property type="match status" value="2"/>
</dbReference>
<dbReference type="PROSITE" id="PS00923">
    <property type="entry name" value="ASP_GLU_RACEMASE_1"/>
    <property type="match status" value="1"/>
</dbReference>
<dbReference type="PROSITE" id="PS00924">
    <property type="entry name" value="ASP_GLU_RACEMASE_2"/>
    <property type="match status" value="1"/>
</dbReference>
<accession>B5REZ1</accession>
<sequence length="283" mass="31029">MATKLQDENTPCLAATPSEPRPTVLVFDSGVGGLSVYDEIRRLLPDLHYIYAFDNVAFPYGEKSETFIVERVVEIATAVQQRYPLSLAVIACNTASTVSLPALREKFAFPVVGVVPAIKPAARLTANGVVGLLATRATVKRPYTHELIARFANECQIAMLGSAELVELAEAKLHGDSVSLEELRRILRPWLRMPEPPDTVVLGCTHFPLLRDELLQVLPEGTRLVDSGAAIARRTAWLLEHEAPDAKSTDANIAYCMAMTPGAEQLLPILQRYGFETLEKLPV</sequence>
<protein>
    <recommendedName>
        <fullName evidence="1">Glutamate racemase</fullName>
        <ecNumber evidence="1">5.1.1.3</ecNumber>
    </recommendedName>
</protein>
<comment type="function">
    <text evidence="1">Provides the (R)-glutamate required for cell wall biosynthesis.</text>
</comment>
<comment type="catalytic activity">
    <reaction evidence="1">
        <text>L-glutamate = D-glutamate</text>
        <dbReference type="Rhea" id="RHEA:12813"/>
        <dbReference type="ChEBI" id="CHEBI:29985"/>
        <dbReference type="ChEBI" id="CHEBI:29986"/>
        <dbReference type="EC" id="5.1.1.3"/>
    </reaction>
</comment>
<comment type="pathway">
    <text evidence="1">Cell wall biogenesis; peptidoglycan biosynthesis.</text>
</comment>
<comment type="similarity">
    <text evidence="1">Belongs to the aspartate/glutamate racemases family.</text>
</comment>
<keyword id="KW-0133">Cell shape</keyword>
<keyword id="KW-0961">Cell wall biogenesis/degradation</keyword>
<keyword id="KW-0413">Isomerase</keyword>
<keyword id="KW-0573">Peptidoglycan synthesis</keyword>
<name>MURI_SALG2</name>
<organism>
    <name type="scientific">Salmonella gallinarum (strain 287/91 / NCTC 13346)</name>
    <dbReference type="NCBI Taxonomy" id="550538"/>
    <lineage>
        <taxon>Bacteria</taxon>
        <taxon>Pseudomonadati</taxon>
        <taxon>Pseudomonadota</taxon>
        <taxon>Gammaproteobacteria</taxon>
        <taxon>Enterobacterales</taxon>
        <taxon>Enterobacteriaceae</taxon>
        <taxon>Salmonella</taxon>
    </lineage>
</organism>
<reference key="1">
    <citation type="journal article" date="2008" name="Genome Res.">
        <title>Comparative genome analysis of Salmonella enteritidis PT4 and Salmonella gallinarum 287/91 provides insights into evolutionary and host adaptation pathways.</title>
        <authorList>
            <person name="Thomson N.R."/>
            <person name="Clayton D.J."/>
            <person name="Windhorst D."/>
            <person name="Vernikos G."/>
            <person name="Davidson S."/>
            <person name="Churcher C."/>
            <person name="Quail M.A."/>
            <person name="Stevens M."/>
            <person name="Jones M.A."/>
            <person name="Watson M."/>
            <person name="Barron A."/>
            <person name="Layton A."/>
            <person name="Pickard D."/>
            <person name="Kingsley R.A."/>
            <person name="Bignell A."/>
            <person name="Clark L."/>
            <person name="Harris B."/>
            <person name="Ormond D."/>
            <person name="Abdellah Z."/>
            <person name="Brooks K."/>
            <person name="Cherevach I."/>
            <person name="Chillingworth T."/>
            <person name="Woodward J."/>
            <person name="Norberczak H."/>
            <person name="Lord A."/>
            <person name="Arrowsmith C."/>
            <person name="Jagels K."/>
            <person name="Moule S."/>
            <person name="Mungall K."/>
            <person name="Saunders M."/>
            <person name="Whitehead S."/>
            <person name="Chabalgoity J.A."/>
            <person name="Maskell D."/>
            <person name="Humphreys T."/>
            <person name="Roberts M."/>
            <person name="Barrow P.A."/>
            <person name="Dougan G."/>
            <person name="Parkhill J."/>
        </authorList>
    </citation>
    <scope>NUCLEOTIDE SEQUENCE [LARGE SCALE GENOMIC DNA]</scope>
    <source>
        <strain>287/91 / NCTC 13346</strain>
    </source>
</reference>